<comment type="function">
    <text evidence="3">Possible component of hydrogenase 4.</text>
</comment>
<comment type="cofactor">
    <cofactor>
        <name>[4Fe-4S] cluster</name>
        <dbReference type="ChEBI" id="CHEBI:49883"/>
    </cofactor>
    <text>Binds 1 [4Fe-4S] cluster.</text>
</comment>
<comment type="interaction">
    <interactant intactId="EBI-548413">
        <id>P77329</id>
    </interactant>
    <interactant intactId="EBI-543750">
        <id>P0A6F5</id>
        <label>groEL</label>
    </interactant>
    <organismsDiffer>false</organismsDiffer>
    <experiments>4</experiments>
</comment>
<comment type="similarity">
    <text evidence="2">Belongs to the complex I 49 kDa subunit family.</text>
</comment>
<keyword id="KW-0004">4Fe-4S</keyword>
<keyword id="KW-0408">Iron</keyword>
<keyword id="KW-0411">Iron-sulfur</keyword>
<keyword id="KW-0479">Metal-binding</keyword>
<keyword id="KW-0520">NAD</keyword>
<keyword id="KW-0560">Oxidoreductase</keyword>
<keyword id="KW-1185">Reference proteome</keyword>
<organism>
    <name type="scientific">Escherichia coli (strain K12)</name>
    <dbReference type="NCBI Taxonomy" id="83333"/>
    <lineage>
        <taxon>Bacteria</taxon>
        <taxon>Pseudomonadati</taxon>
        <taxon>Pseudomonadota</taxon>
        <taxon>Gammaproteobacteria</taxon>
        <taxon>Enterobacterales</taxon>
        <taxon>Enterobacteriaceae</taxon>
        <taxon>Escherichia</taxon>
    </lineage>
</organism>
<feature type="chain" id="PRO_0000118626" description="Hydrogenase-4 component G">
    <location>
        <begin position="1"/>
        <end position="555"/>
    </location>
</feature>
<gene>
    <name evidence="1" type="primary">hyfG</name>
    <name type="ordered locus">b2487</name>
    <name type="ordered locus">JW2472</name>
</gene>
<name>HYFG_ECOLI</name>
<evidence type="ECO:0000303" key="1">
    <source>
    </source>
</evidence>
<evidence type="ECO:0000305" key="2"/>
<evidence type="ECO:0000305" key="3">
    <source>
    </source>
</evidence>
<accession>P77329</accession>
<accession>P76974</accession>
<dbReference type="EC" id="1.-.-.-"/>
<dbReference type="EMBL" id="M63654">
    <property type="protein sequence ID" value="AAB88569.1"/>
    <property type="molecule type" value="Genomic_DNA"/>
</dbReference>
<dbReference type="EMBL" id="U00096">
    <property type="protein sequence ID" value="AAC75540.1"/>
    <property type="molecule type" value="Genomic_DNA"/>
</dbReference>
<dbReference type="EMBL" id="AP009048">
    <property type="protein sequence ID" value="BAA16375.2"/>
    <property type="molecule type" value="Genomic_DNA"/>
</dbReference>
<dbReference type="PIR" id="F65024">
    <property type="entry name" value="F65024"/>
</dbReference>
<dbReference type="RefSeq" id="NP_416982.1">
    <property type="nucleotide sequence ID" value="NC_000913.3"/>
</dbReference>
<dbReference type="RefSeq" id="WP_001102321.1">
    <property type="nucleotide sequence ID" value="NZ_LN832404.1"/>
</dbReference>
<dbReference type="SMR" id="P77329"/>
<dbReference type="BioGRID" id="4260765">
    <property type="interactions" value="7"/>
</dbReference>
<dbReference type="ComplexPortal" id="CPX-6028">
    <property type="entry name" value="Formate hydrogenlyase-H/Hydrogenase-4 complex"/>
</dbReference>
<dbReference type="DIP" id="DIP-9989N"/>
<dbReference type="FunCoup" id="P77329">
    <property type="interactions" value="80"/>
</dbReference>
<dbReference type="IntAct" id="P77329">
    <property type="interactions" value="7"/>
</dbReference>
<dbReference type="STRING" id="511145.b2487"/>
<dbReference type="TCDB" id="3.D.1.9.1">
    <property type="family name" value="the h+ or na+-translocating nadh dehydrogenase (ndh) family"/>
</dbReference>
<dbReference type="PaxDb" id="511145-b2487"/>
<dbReference type="EnsemblBacteria" id="AAC75540">
    <property type="protein sequence ID" value="AAC75540"/>
    <property type="gene ID" value="b2487"/>
</dbReference>
<dbReference type="GeneID" id="946964"/>
<dbReference type="KEGG" id="ecj:JW2472"/>
<dbReference type="KEGG" id="eco:b2487"/>
<dbReference type="KEGG" id="ecoc:C3026_13800"/>
<dbReference type="PATRIC" id="fig|1411691.4.peg.4252"/>
<dbReference type="EchoBASE" id="EB3967"/>
<dbReference type="eggNOG" id="COG3261">
    <property type="taxonomic scope" value="Bacteria"/>
</dbReference>
<dbReference type="eggNOG" id="COG3262">
    <property type="taxonomic scope" value="Bacteria"/>
</dbReference>
<dbReference type="HOGENOM" id="CLU_015134_3_1_6"/>
<dbReference type="InParanoid" id="P77329"/>
<dbReference type="OMA" id="VGIVEGW"/>
<dbReference type="OrthoDB" id="9801496at2"/>
<dbReference type="PhylomeDB" id="P77329"/>
<dbReference type="BioCyc" id="EcoCyc:MONOMER0-150"/>
<dbReference type="PRO" id="PR:P77329"/>
<dbReference type="Proteomes" id="UP000000625">
    <property type="component" value="Chromosome"/>
</dbReference>
<dbReference type="GO" id="GO:0009326">
    <property type="term" value="C:formate dehydrogenase complex"/>
    <property type="evidence" value="ECO:0000303"/>
    <property type="project" value="ComplexPortal"/>
</dbReference>
<dbReference type="GO" id="GO:0016020">
    <property type="term" value="C:membrane"/>
    <property type="evidence" value="ECO:0000303"/>
    <property type="project" value="ComplexPortal"/>
</dbReference>
<dbReference type="GO" id="GO:0051539">
    <property type="term" value="F:4 iron, 4 sulfur cluster binding"/>
    <property type="evidence" value="ECO:0007669"/>
    <property type="project" value="UniProtKB-KW"/>
</dbReference>
<dbReference type="GO" id="GO:0051540">
    <property type="term" value="F:metal cluster binding"/>
    <property type="evidence" value="ECO:0000255"/>
    <property type="project" value="EcoCyc"/>
</dbReference>
<dbReference type="GO" id="GO:0051287">
    <property type="term" value="F:NAD binding"/>
    <property type="evidence" value="ECO:0007669"/>
    <property type="project" value="InterPro"/>
</dbReference>
<dbReference type="GO" id="GO:0008137">
    <property type="term" value="F:NADH dehydrogenase (ubiquinone) activity"/>
    <property type="evidence" value="ECO:0007669"/>
    <property type="project" value="InterPro"/>
</dbReference>
<dbReference type="GO" id="GO:0016151">
    <property type="term" value="F:nickel cation binding"/>
    <property type="evidence" value="ECO:0007669"/>
    <property type="project" value="InterPro"/>
</dbReference>
<dbReference type="GO" id="GO:0048038">
    <property type="term" value="F:quinone binding"/>
    <property type="evidence" value="ECO:0007669"/>
    <property type="project" value="InterPro"/>
</dbReference>
<dbReference type="GO" id="GO:0019645">
    <property type="term" value="P:anaerobic electron transport chain"/>
    <property type="evidence" value="ECO:0000303"/>
    <property type="project" value="ComplexPortal"/>
</dbReference>
<dbReference type="GO" id="GO:0009061">
    <property type="term" value="P:anaerobic respiration"/>
    <property type="evidence" value="ECO:0000303"/>
    <property type="project" value="ComplexPortal"/>
</dbReference>
<dbReference type="GO" id="GO:0015944">
    <property type="term" value="P:formate oxidation"/>
    <property type="evidence" value="ECO:0000303"/>
    <property type="project" value="ComplexPortal"/>
</dbReference>
<dbReference type="GO" id="GO:0006007">
    <property type="term" value="P:glucose catabolic process"/>
    <property type="evidence" value="ECO:0000303"/>
    <property type="project" value="ComplexPortal"/>
</dbReference>
<dbReference type="FunFam" id="1.10.645.10:FF:000004">
    <property type="entry name" value="Hydrogenase 3, large subunit"/>
    <property type="match status" value="1"/>
</dbReference>
<dbReference type="Gene3D" id="1.10.645.10">
    <property type="entry name" value="Cytochrome-c3 Hydrogenase, chain B"/>
    <property type="match status" value="1"/>
</dbReference>
<dbReference type="Gene3D" id="3.30.460.80">
    <property type="entry name" value="NADH:ubiquinone oxidoreductase, 30kDa subunit"/>
    <property type="match status" value="1"/>
</dbReference>
<dbReference type="InterPro" id="IPR052197">
    <property type="entry name" value="ComplexI_49kDa-like"/>
</dbReference>
<dbReference type="InterPro" id="IPR001135">
    <property type="entry name" value="NADH_Q_OxRdtase_suD"/>
</dbReference>
<dbReference type="InterPro" id="IPR037232">
    <property type="entry name" value="NADH_quin_OxRdtase_su_C/D-like"/>
</dbReference>
<dbReference type="InterPro" id="IPR001268">
    <property type="entry name" value="NADH_UbQ_OxRdtase_30kDa_su"/>
</dbReference>
<dbReference type="InterPro" id="IPR014029">
    <property type="entry name" value="NADH_UbQ_OxRdtase_49kDa_CS"/>
</dbReference>
<dbReference type="InterPro" id="IPR001501">
    <property type="entry name" value="Ni-dep_hyd_lsu"/>
</dbReference>
<dbReference type="InterPro" id="IPR029014">
    <property type="entry name" value="NiFe-Hase_large"/>
</dbReference>
<dbReference type="PANTHER" id="PTHR43485:SF1">
    <property type="entry name" value="FORMATE HYDROGENLYASE SUBUNIT 5-RELATED"/>
    <property type="match status" value="1"/>
</dbReference>
<dbReference type="PANTHER" id="PTHR43485">
    <property type="entry name" value="HYDROGENASE-4 COMPONENT G"/>
    <property type="match status" value="1"/>
</dbReference>
<dbReference type="Pfam" id="PF00329">
    <property type="entry name" value="Complex1_30kDa"/>
    <property type="match status" value="1"/>
</dbReference>
<dbReference type="Pfam" id="PF00346">
    <property type="entry name" value="Complex1_49kDa"/>
    <property type="match status" value="2"/>
</dbReference>
<dbReference type="Pfam" id="PF00374">
    <property type="entry name" value="NiFeSe_Hases"/>
    <property type="match status" value="1"/>
</dbReference>
<dbReference type="SUPFAM" id="SSF56762">
    <property type="entry name" value="HydB/Nqo4-like"/>
    <property type="match status" value="1"/>
</dbReference>
<dbReference type="SUPFAM" id="SSF143243">
    <property type="entry name" value="Nqo5-like"/>
    <property type="match status" value="1"/>
</dbReference>
<dbReference type="PROSITE" id="PS00535">
    <property type="entry name" value="COMPLEX1_49K"/>
    <property type="match status" value="1"/>
</dbReference>
<sequence length="555" mass="63383">MNVNSSSNRGEAILAALKTQFPGAVLDEERQTPEQVTITVKINLLPDVVQYLYYQHDGWLPVLFGNDERTLNGHYAVYYALSMEGAEKCWIVVKALVDADSREFPSVTPRVPAAVWGEREIRDMYGLIPVGLPDQRRLVLPDDWPEDMHPLRKDAMDYRLRPEPTTDSETYPFINEGNSDARVIPVGPLHITSDEPGHFRLFVDGEQIVDADYRLFYVHRGMEKLAETRMGYNEVTFLSDRVCGICGFAHSVAYTNSVENALGIEVPQRAHTIRSILLEVERLHSHLLNLGLSCHFVGFDTGFMQFFRVREKSMTMAELLIGSRKTYGLNLIGGVRRDILKEQRLQTLKLVREMRADVSELVEMLLATPNMEQRTQGIGILDRQIARDLRFDHPYADYGNIPKTLFTFTGGDVFSRVMVRVKETFDSLAMLEFALDNMPDTPLLTEGFSYKPHAFALGFVEAPRGEDVHWSMLGDNQKLFRWRCRAATYANWPVLRYMLRGNTVSDAPLIIGSLDPCYSCTDRVTLVDVRKRQSKTVPYKEIERYGIDRNRSPLK</sequence>
<reference key="1">
    <citation type="journal article" date="1997" name="Microbiology">
        <title>A 12-cistron Escherichia coli operon (hyf) encoding a putative proton-translocating formate hydrogenlyase system.</title>
        <authorList>
            <person name="Andrews S.C."/>
            <person name="Berks B.C."/>
            <person name="McClay J."/>
            <person name="Ambler A."/>
            <person name="Quail M.A."/>
            <person name="Golby P."/>
            <person name="Guest J.R."/>
        </authorList>
    </citation>
    <scope>NUCLEOTIDE SEQUENCE [GENOMIC DNA]</scope>
    <scope>POSSIBLE FUNCTION</scope>
    <source>
        <strain>K12</strain>
    </source>
</reference>
<reference key="2">
    <citation type="journal article" date="1997" name="DNA Res.">
        <title>Construction of a contiguous 874-kb sequence of the Escherichia coli-K12 genome corresponding to 50.0-68.8 min on the linkage map and analysis of its sequence features.</title>
        <authorList>
            <person name="Yamamoto Y."/>
            <person name="Aiba H."/>
            <person name="Baba T."/>
            <person name="Hayashi K."/>
            <person name="Inada T."/>
            <person name="Isono K."/>
            <person name="Itoh T."/>
            <person name="Kimura S."/>
            <person name="Kitagawa M."/>
            <person name="Makino K."/>
            <person name="Miki T."/>
            <person name="Mitsuhashi N."/>
            <person name="Mizobuchi K."/>
            <person name="Mori H."/>
            <person name="Nakade S."/>
            <person name="Nakamura Y."/>
            <person name="Nashimoto H."/>
            <person name="Oshima T."/>
            <person name="Oyama S."/>
            <person name="Saito N."/>
            <person name="Sampei G."/>
            <person name="Satoh Y."/>
            <person name="Sivasundaram S."/>
            <person name="Tagami H."/>
            <person name="Takahashi H."/>
            <person name="Takeda J."/>
            <person name="Takemoto K."/>
            <person name="Uehara K."/>
            <person name="Wada C."/>
            <person name="Yamagata S."/>
            <person name="Horiuchi T."/>
        </authorList>
    </citation>
    <scope>NUCLEOTIDE SEQUENCE [LARGE SCALE GENOMIC DNA]</scope>
    <source>
        <strain>K12 / W3110 / ATCC 27325 / DSM 5911</strain>
    </source>
</reference>
<reference key="3">
    <citation type="journal article" date="1997" name="Science">
        <title>The complete genome sequence of Escherichia coli K-12.</title>
        <authorList>
            <person name="Blattner F.R."/>
            <person name="Plunkett G. III"/>
            <person name="Bloch C.A."/>
            <person name="Perna N.T."/>
            <person name="Burland V."/>
            <person name="Riley M."/>
            <person name="Collado-Vides J."/>
            <person name="Glasner J.D."/>
            <person name="Rode C.K."/>
            <person name="Mayhew G.F."/>
            <person name="Gregor J."/>
            <person name="Davis N.W."/>
            <person name="Kirkpatrick H.A."/>
            <person name="Goeden M.A."/>
            <person name="Rose D.J."/>
            <person name="Mau B."/>
            <person name="Shao Y."/>
        </authorList>
    </citation>
    <scope>NUCLEOTIDE SEQUENCE [LARGE SCALE GENOMIC DNA]</scope>
    <source>
        <strain>K12 / MG1655 / ATCC 47076</strain>
    </source>
</reference>
<reference key="4">
    <citation type="journal article" date="2006" name="Mol. Syst. Biol.">
        <title>Highly accurate genome sequences of Escherichia coli K-12 strains MG1655 and W3110.</title>
        <authorList>
            <person name="Hayashi K."/>
            <person name="Morooka N."/>
            <person name="Yamamoto Y."/>
            <person name="Fujita K."/>
            <person name="Isono K."/>
            <person name="Choi S."/>
            <person name="Ohtsubo E."/>
            <person name="Baba T."/>
            <person name="Wanner B.L."/>
            <person name="Mori H."/>
            <person name="Horiuchi T."/>
        </authorList>
    </citation>
    <scope>NUCLEOTIDE SEQUENCE [LARGE SCALE GENOMIC DNA]</scope>
    <source>
        <strain>K12 / W3110 / ATCC 27325 / DSM 5911</strain>
    </source>
</reference>
<protein>
    <recommendedName>
        <fullName>Hydrogenase-4 component G</fullName>
        <ecNumber>1.-.-.-</ecNumber>
    </recommendedName>
</protein>
<proteinExistence type="evidence at protein level"/>